<gene>
    <name type="primary">GRXS6</name>
    <name type="synonym">ROXY17</name>
    <name type="ordered locus">At3g62930</name>
    <name type="ORF">T20O10.30</name>
</gene>
<comment type="function">
    <text evidence="4">May only reduce GSH-thiol disulfides, but not protein disulfides.</text>
</comment>
<comment type="subcellular location">
    <subcellularLocation>
        <location evidence="1">Cytoplasm</location>
    </subcellularLocation>
</comment>
<comment type="similarity">
    <text evidence="4">Belongs to the glutaredoxin family. CC-type subfamily.</text>
</comment>
<evidence type="ECO:0000250" key="1"/>
<evidence type="ECO:0000255" key="2"/>
<evidence type="ECO:0000255" key="3">
    <source>
        <dbReference type="PROSITE-ProRule" id="PRU00686"/>
    </source>
</evidence>
<evidence type="ECO:0000305" key="4"/>
<name>GRXS6_ARATH</name>
<reference key="1">
    <citation type="journal article" date="2009" name="Plant Cell">
        <title>Nuclear activity of ROXY1, a glutaredoxin interacting with TGA factors, is required for petal development in Arabidopsis thaliana.</title>
        <authorList>
            <person name="Li S."/>
            <person name="Lauri A."/>
            <person name="Ziemann M."/>
            <person name="Busch A."/>
            <person name="Bhave M."/>
            <person name="Zachgo S."/>
        </authorList>
    </citation>
    <scope>NUCLEOTIDE SEQUENCE [MRNA]</scope>
    <scope>GENE FAMILY</scope>
</reference>
<reference key="2">
    <citation type="journal article" date="2000" name="Nature">
        <title>Sequence and analysis of chromosome 3 of the plant Arabidopsis thaliana.</title>
        <authorList>
            <person name="Salanoubat M."/>
            <person name="Lemcke K."/>
            <person name="Rieger M."/>
            <person name="Ansorge W."/>
            <person name="Unseld M."/>
            <person name="Fartmann B."/>
            <person name="Valle G."/>
            <person name="Bloecker H."/>
            <person name="Perez-Alonso M."/>
            <person name="Obermaier B."/>
            <person name="Delseny M."/>
            <person name="Boutry M."/>
            <person name="Grivell L.A."/>
            <person name="Mache R."/>
            <person name="Puigdomenech P."/>
            <person name="De Simone V."/>
            <person name="Choisne N."/>
            <person name="Artiguenave F."/>
            <person name="Robert C."/>
            <person name="Brottier P."/>
            <person name="Wincker P."/>
            <person name="Cattolico L."/>
            <person name="Weissenbach J."/>
            <person name="Saurin W."/>
            <person name="Quetier F."/>
            <person name="Schaefer M."/>
            <person name="Mueller-Auer S."/>
            <person name="Gabel C."/>
            <person name="Fuchs M."/>
            <person name="Benes V."/>
            <person name="Wurmbach E."/>
            <person name="Drzonek H."/>
            <person name="Erfle H."/>
            <person name="Jordan N."/>
            <person name="Bangert S."/>
            <person name="Wiedelmann R."/>
            <person name="Kranz H."/>
            <person name="Voss H."/>
            <person name="Holland R."/>
            <person name="Brandt P."/>
            <person name="Nyakatura G."/>
            <person name="Vezzi A."/>
            <person name="D'Angelo M."/>
            <person name="Pallavicini A."/>
            <person name="Toppo S."/>
            <person name="Simionati B."/>
            <person name="Conrad A."/>
            <person name="Hornischer K."/>
            <person name="Kauer G."/>
            <person name="Loehnert T.-H."/>
            <person name="Nordsiek G."/>
            <person name="Reichelt J."/>
            <person name="Scharfe M."/>
            <person name="Schoen O."/>
            <person name="Bargues M."/>
            <person name="Terol J."/>
            <person name="Climent J."/>
            <person name="Navarro P."/>
            <person name="Collado C."/>
            <person name="Perez-Perez A."/>
            <person name="Ottenwaelder B."/>
            <person name="Duchemin D."/>
            <person name="Cooke R."/>
            <person name="Laudie M."/>
            <person name="Berger-Llauro C."/>
            <person name="Purnelle B."/>
            <person name="Masuy D."/>
            <person name="de Haan M."/>
            <person name="Maarse A.C."/>
            <person name="Alcaraz J.-P."/>
            <person name="Cottet A."/>
            <person name="Casacuberta E."/>
            <person name="Monfort A."/>
            <person name="Argiriou A."/>
            <person name="Flores M."/>
            <person name="Liguori R."/>
            <person name="Vitale D."/>
            <person name="Mannhaupt G."/>
            <person name="Haase D."/>
            <person name="Schoof H."/>
            <person name="Rudd S."/>
            <person name="Zaccaria P."/>
            <person name="Mewes H.-W."/>
            <person name="Mayer K.F.X."/>
            <person name="Kaul S."/>
            <person name="Town C.D."/>
            <person name="Koo H.L."/>
            <person name="Tallon L.J."/>
            <person name="Jenkins J."/>
            <person name="Rooney T."/>
            <person name="Rizzo M."/>
            <person name="Walts A."/>
            <person name="Utterback T."/>
            <person name="Fujii C.Y."/>
            <person name="Shea T.P."/>
            <person name="Creasy T.H."/>
            <person name="Haas B."/>
            <person name="Maiti R."/>
            <person name="Wu D."/>
            <person name="Peterson J."/>
            <person name="Van Aken S."/>
            <person name="Pai G."/>
            <person name="Militscher J."/>
            <person name="Sellers P."/>
            <person name="Gill J.E."/>
            <person name="Feldblyum T.V."/>
            <person name="Preuss D."/>
            <person name="Lin X."/>
            <person name="Nierman W.C."/>
            <person name="Salzberg S.L."/>
            <person name="White O."/>
            <person name="Venter J.C."/>
            <person name="Fraser C.M."/>
            <person name="Kaneko T."/>
            <person name="Nakamura Y."/>
            <person name="Sato S."/>
            <person name="Kato T."/>
            <person name="Asamizu E."/>
            <person name="Sasamoto S."/>
            <person name="Kimura T."/>
            <person name="Idesawa K."/>
            <person name="Kawashima K."/>
            <person name="Kishida Y."/>
            <person name="Kiyokawa C."/>
            <person name="Kohara M."/>
            <person name="Matsumoto M."/>
            <person name="Matsuno A."/>
            <person name="Muraki A."/>
            <person name="Nakayama S."/>
            <person name="Nakazaki N."/>
            <person name="Shinpo S."/>
            <person name="Takeuchi C."/>
            <person name="Wada T."/>
            <person name="Watanabe A."/>
            <person name="Yamada M."/>
            <person name="Yasuda M."/>
            <person name="Tabata S."/>
        </authorList>
    </citation>
    <scope>NUCLEOTIDE SEQUENCE [LARGE SCALE GENOMIC DNA]</scope>
    <source>
        <strain>cv. Columbia</strain>
    </source>
</reference>
<reference key="3">
    <citation type="journal article" date="2017" name="Plant J.">
        <title>Araport11: a complete reannotation of the Arabidopsis thaliana reference genome.</title>
        <authorList>
            <person name="Cheng C.Y."/>
            <person name="Krishnakumar V."/>
            <person name="Chan A.P."/>
            <person name="Thibaud-Nissen F."/>
            <person name="Schobel S."/>
            <person name="Town C.D."/>
        </authorList>
    </citation>
    <scope>GENOME REANNOTATION</scope>
    <source>
        <strain>cv. Columbia</strain>
    </source>
</reference>
<reference key="4">
    <citation type="submission" date="2004-03" db="EMBL/GenBank/DDBJ databases">
        <title>Arabidopsis ORF clones.</title>
        <authorList>
            <person name="Cheuk R.F."/>
            <person name="Chen H."/>
            <person name="Kim C.J."/>
            <person name="Shinn P."/>
            <person name="Carninci P."/>
            <person name="Hayashizaki Y."/>
            <person name="Ishida J."/>
            <person name="Kamiya A."/>
            <person name="Kawai J."/>
            <person name="Narusaka M."/>
            <person name="Sakurai T."/>
            <person name="Satou M."/>
            <person name="Seki M."/>
            <person name="Shinozaki K."/>
            <person name="Ecker J.R."/>
        </authorList>
    </citation>
    <scope>NUCLEOTIDE SEQUENCE [LARGE SCALE MRNA]</scope>
    <source>
        <strain>cv. Columbia</strain>
    </source>
</reference>
<reference key="5">
    <citation type="submission" date="2005-03" db="EMBL/GenBank/DDBJ databases">
        <title>Large-scale analysis of RIKEN Arabidopsis full-length (RAFL) cDNAs.</title>
        <authorList>
            <person name="Totoki Y."/>
            <person name="Seki M."/>
            <person name="Ishida J."/>
            <person name="Nakajima M."/>
            <person name="Enju A."/>
            <person name="Kamiya A."/>
            <person name="Narusaka M."/>
            <person name="Shin-i T."/>
            <person name="Nakagawa M."/>
            <person name="Sakamoto N."/>
            <person name="Oishi K."/>
            <person name="Kohara Y."/>
            <person name="Kobayashi M."/>
            <person name="Toyoda A."/>
            <person name="Sakaki Y."/>
            <person name="Sakurai T."/>
            <person name="Iida K."/>
            <person name="Akiyama K."/>
            <person name="Satou M."/>
            <person name="Toyoda T."/>
            <person name="Konagaya A."/>
            <person name="Carninci P."/>
            <person name="Kawai J."/>
            <person name="Hayashizaki Y."/>
            <person name="Shinozaki K."/>
        </authorList>
    </citation>
    <scope>NUCLEOTIDE SEQUENCE [LARGE SCALE MRNA]</scope>
    <source>
        <strain>cv. Columbia</strain>
    </source>
</reference>
<reference key="6">
    <citation type="journal article" date="2004" name="Cell. Mol. Life Sci.">
        <title>Plant glutaredoxins: still mysterious reducing systems.</title>
        <authorList>
            <person name="Rouhier N."/>
            <person name="Gelhaye E."/>
            <person name="Jacquot J.-P."/>
        </authorList>
    </citation>
    <scope>GENE FAMILY</scope>
    <scope>NOMENCLATURE</scope>
</reference>
<reference key="7">
    <citation type="journal article" date="2006" name="J. Exp. Bot.">
        <title>Genome-wide analysis of plant glutaredoxin systems.</title>
        <authorList>
            <person name="Rouhier N."/>
            <person name="Couturier J."/>
            <person name="Jacquot J.-P."/>
        </authorList>
    </citation>
    <scope>GENE FAMILY</scope>
</reference>
<feature type="chain" id="PRO_0000268727" description="Monothiol glutaredoxin-S6">
    <location>
        <begin position="1"/>
        <end position="102"/>
    </location>
</feature>
<feature type="domain" description="Glutaredoxin" evidence="3">
    <location>
        <begin position="1"/>
        <end position="101"/>
    </location>
</feature>
<feature type="binding site" evidence="2">
    <location>
        <position position="21"/>
    </location>
    <ligand>
        <name>[2Fe-2S] cluster</name>
        <dbReference type="ChEBI" id="CHEBI:190135"/>
        <note>ligand shared between dimeric partners</note>
    </ligand>
</feature>
<organism>
    <name type="scientific">Arabidopsis thaliana</name>
    <name type="common">Mouse-ear cress</name>
    <dbReference type="NCBI Taxonomy" id="3702"/>
    <lineage>
        <taxon>Eukaryota</taxon>
        <taxon>Viridiplantae</taxon>
        <taxon>Streptophyta</taxon>
        <taxon>Embryophyta</taxon>
        <taxon>Tracheophyta</taxon>
        <taxon>Spermatophyta</taxon>
        <taxon>Magnoliopsida</taxon>
        <taxon>eudicotyledons</taxon>
        <taxon>Gunneridae</taxon>
        <taxon>Pentapetalae</taxon>
        <taxon>rosids</taxon>
        <taxon>malvids</taxon>
        <taxon>Brassicales</taxon>
        <taxon>Brassicaceae</taxon>
        <taxon>Camelineae</taxon>
        <taxon>Arabidopsis</taxon>
    </lineage>
</organism>
<proteinExistence type="inferred from homology"/>
<accession>Q9LYC8</accession>
<accession>C1JGQ7</accession>
<sequence length="102" mass="11111">MESVRSLVEDKPVVIFSKSSCCMSHSIQTLISGFGAKMTVYELDQFSNGQEIEKALVQMGCKPSVPAVFIGQQFIGGANQVMTLQVKNQLAAMLRRAGAIWV</sequence>
<protein>
    <recommendedName>
        <fullName>Monothiol glutaredoxin-S6</fullName>
        <shortName>AtGrxS6</shortName>
    </recommendedName>
    <alternativeName>
        <fullName>Protein ROXY 17</fullName>
    </alternativeName>
</protein>
<keyword id="KW-0001">2Fe-2S</keyword>
<keyword id="KW-0963">Cytoplasm</keyword>
<keyword id="KW-0408">Iron</keyword>
<keyword id="KW-0411">Iron-sulfur</keyword>
<keyword id="KW-0479">Metal-binding</keyword>
<keyword id="KW-0676">Redox-active center</keyword>
<keyword id="KW-1185">Reference proteome</keyword>
<dbReference type="EMBL" id="FJ611916">
    <property type="protein sequence ID" value="ACO50421.1"/>
    <property type="molecule type" value="mRNA"/>
</dbReference>
<dbReference type="EMBL" id="AL163816">
    <property type="protein sequence ID" value="CAB87738.1"/>
    <property type="molecule type" value="Genomic_DNA"/>
</dbReference>
<dbReference type="EMBL" id="CP002686">
    <property type="protein sequence ID" value="AEE80412.1"/>
    <property type="molecule type" value="Genomic_DNA"/>
</dbReference>
<dbReference type="EMBL" id="BT011712">
    <property type="protein sequence ID" value="AAS49075.1"/>
    <property type="molecule type" value="mRNA"/>
</dbReference>
<dbReference type="EMBL" id="AK221590">
    <property type="protein sequence ID" value="BAD95105.1"/>
    <property type="molecule type" value="mRNA"/>
</dbReference>
<dbReference type="PIR" id="T48082">
    <property type="entry name" value="T48082"/>
</dbReference>
<dbReference type="RefSeq" id="NP_191852.1">
    <property type="nucleotide sequence ID" value="NM_116158.2"/>
</dbReference>
<dbReference type="SMR" id="Q9LYC8"/>
<dbReference type="BioGRID" id="10782">
    <property type="interactions" value="2"/>
</dbReference>
<dbReference type="FunCoup" id="Q9LYC8">
    <property type="interactions" value="32"/>
</dbReference>
<dbReference type="IntAct" id="Q9LYC8">
    <property type="interactions" value="1"/>
</dbReference>
<dbReference type="STRING" id="3702.Q9LYC8"/>
<dbReference type="PaxDb" id="3702-AT3G62930.1"/>
<dbReference type="ProteomicsDB" id="222367"/>
<dbReference type="EnsemblPlants" id="AT3G62930.1">
    <property type="protein sequence ID" value="AT3G62930.1"/>
    <property type="gene ID" value="AT3G62930"/>
</dbReference>
<dbReference type="GeneID" id="825468"/>
<dbReference type="Gramene" id="AT3G62930.1">
    <property type="protein sequence ID" value="AT3G62930.1"/>
    <property type="gene ID" value="AT3G62930"/>
</dbReference>
<dbReference type="KEGG" id="ath:AT3G62930"/>
<dbReference type="Araport" id="AT3G62930"/>
<dbReference type="TAIR" id="AT3G62930">
    <property type="gene designation" value="GRXS6"/>
</dbReference>
<dbReference type="eggNOG" id="KOG1752">
    <property type="taxonomic scope" value="Eukaryota"/>
</dbReference>
<dbReference type="HOGENOM" id="CLU_026126_6_0_1"/>
<dbReference type="InParanoid" id="Q9LYC8"/>
<dbReference type="OMA" id="PEDCHAN"/>
<dbReference type="OrthoDB" id="418495at2759"/>
<dbReference type="PhylomeDB" id="Q9LYC8"/>
<dbReference type="PRO" id="PR:Q9LYC8"/>
<dbReference type="Proteomes" id="UP000006548">
    <property type="component" value="Chromosome 3"/>
</dbReference>
<dbReference type="ExpressionAtlas" id="Q9LYC8">
    <property type="expression patterns" value="baseline and differential"/>
</dbReference>
<dbReference type="GO" id="GO:0005737">
    <property type="term" value="C:cytoplasm"/>
    <property type="evidence" value="ECO:0007669"/>
    <property type="project" value="UniProtKB-SubCell"/>
</dbReference>
<dbReference type="GO" id="GO:0051537">
    <property type="term" value="F:2 iron, 2 sulfur cluster binding"/>
    <property type="evidence" value="ECO:0007669"/>
    <property type="project" value="UniProtKB-KW"/>
</dbReference>
<dbReference type="GO" id="GO:0046872">
    <property type="term" value="F:metal ion binding"/>
    <property type="evidence" value="ECO:0007669"/>
    <property type="project" value="UniProtKB-KW"/>
</dbReference>
<dbReference type="GO" id="GO:0000122">
    <property type="term" value="P:negative regulation of transcription by RNA polymerase II"/>
    <property type="evidence" value="ECO:0000314"/>
    <property type="project" value="TAIR"/>
</dbReference>
<dbReference type="GO" id="GO:0010167">
    <property type="term" value="P:response to nitrate"/>
    <property type="evidence" value="ECO:0000270"/>
    <property type="project" value="TAIR"/>
</dbReference>
<dbReference type="CDD" id="cd03419">
    <property type="entry name" value="GRX_GRXh_1_2_like"/>
    <property type="match status" value="1"/>
</dbReference>
<dbReference type="Gene3D" id="3.40.30.10">
    <property type="entry name" value="Glutaredoxin"/>
    <property type="match status" value="1"/>
</dbReference>
<dbReference type="InterPro" id="IPR011905">
    <property type="entry name" value="GlrX-like_pln_2"/>
</dbReference>
<dbReference type="InterPro" id="IPR002109">
    <property type="entry name" value="Glutaredoxin"/>
</dbReference>
<dbReference type="InterPro" id="IPR014025">
    <property type="entry name" value="Glutaredoxin_subgr"/>
</dbReference>
<dbReference type="InterPro" id="IPR036249">
    <property type="entry name" value="Thioredoxin-like_sf"/>
</dbReference>
<dbReference type="NCBIfam" id="TIGR02189">
    <property type="entry name" value="GlrX-like_plant"/>
    <property type="match status" value="1"/>
</dbReference>
<dbReference type="PANTHER" id="PTHR10168">
    <property type="entry name" value="GLUTAREDOXIN"/>
    <property type="match status" value="1"/>
</dbReference>
<dbReference type="Pfam" id="PF00462">
    <property type="entry name" value="Glutaredoxin"/>
    <property type="match status" value="1"/>
</dbReference>
<dbReference type="PRINTS" id="PR00160">
    <property type="entry name" value="GLUTAREDOXIN"/>
</dbReference>
<dbReference type="SUPFAM" id="SSF52833">
    <property type="entry name" value="Thioredoxin-like"/>
    <property type="match status" value="1"/>
</dbReference>
<dbReference type="PROSITE" id="PS51354">
    <property type="entry name" value="GLUTAREDOXIN_2"/>
    <property type="match status" value="1"/>
</dbReference>